<evidence type="ECO:0000255" key="1">
    <source>
        <dbReference type="HAMAP-Rule" id="MF_00030"/>
    </source>
</evidence>
<evidence type="ECO:0000255" key="2">
    <source>
        <dbReference type="PROSITE-ProRule" id="PRU01175"/>
    </source>
</evidence>
<accession>B1JK16</accession>
<sequence>MSGIDFKQKISFQRPFSKPSSAEDEYEITRVFESDRGRIVNSAAIRRLQQKTQVFPLERNAAVRSRLTHSLEVQQVGRYIAKEILNRFKQDKKITAYGLDKLLDPFESIVEMACLMHDIGNPPFGHFGESAINDWFTKRMDPNGGSGSEPQSRDQCQVEVLKLREGETELNILRSKIRHDLSQFEGNAQAIRLVHSLLKLNLTYAQVGCILKYTKPAYWSAPIPASHNYLMKKPGFYLAEENYVKELRRELNMEEFDRFPLTYIMEAADDISYCIADLEDAVEKNIFSVEQLYDHMSQEWGAVTPGDLFDKVVGAAFRQLGREQGRRSSEDQFFMYLRVNTVGKLVPHAAQRFIENLPAVFSGSFNQALLEDSSAACKLLQIFKRVAVKHVFNHPEVEQLELQGYRVISGLLDIYSPLLAMPETAFTQLVADDRHRKYPIETRLFHKLSIKHRLAYAESAERIRNLPSEQYEIYEYYYRARLIQDYISGMTDLYAYDEYRRLMAAE</sequence>
<reference key="1">
    <citation type="submission" date="2008-02" db="EMBL/GenBank/DDBJ databases">
        <title>Complete sequence of Yersinia pseudotuberculosis YPIII.</title>
        <authorList>
            <consortium name="US DOE Joint Genome Institute"/>
            <person name="Copeland A."/>
            <person name="Lucas S."/>
            <person name="Lapidus A."/>
            <person name="Glavina del Rio T."/>
            <person name="Dalin E."/>
            <person name="Tice H."/>
            <person name="Bruce D."/>
            <person name="Goodwin L."/>
            <person name="Pitluck S."/>
            <person name="Munk A.C."/>
            <person name="Brettin T."/>
            <person name="Detter J.C."/>
            <person name="Han C."/>
            <person name="Tapia R."/>
            <person name="Schmutz J."/>
            <person name="Larimer F."/>
            <person name="Land M."/>
            <person name="Hauser L."/>
            <person name="Challacombe J.F."/>
            <person name="Green L."/>
            <person name="Lindler L.E."/>
            <person name="Nikolich M.P."/>
            <person name="Richardson P."/>
        </authorList>
    </citation>
    <scope>NUCLEOTIDE SEQUENCE [LARGE SCALE GENOMIC DNA]</scope>
    <source>
        <strain>YPIII</strain>
    </source>
</reference>
<proteinExistence type="inferred from homology"/>
<feature type="chain" id="PRO_1000090269" description="Deoxyguanosinetriphosphate triphosphohydrolase">
    <location>
        <begin position="1"/>
        <end position="506"/>
    </location>
</feature>
<feature type="domain" description="HD" evidence="2">
    <location>
        <begin position="66"/>
        <end position="274"/>
    </location>
</feature>
<protein>
    <recommendedName>
        <fullName evidence="1">Deoxyguanosinetriphosphate triphosphohydrolase</fullName>
        <shortName evidence="1">dGTP triphosphohydrolase</shortName>
        <shortName evidence="1">dGTPase</shortName>
        <ecNumber evidence="1">3.1.5.1</ecNumber>
    </recommendedName>
</protein>
<comment type="function">
    <text evidence="1">dGTPase preferentially hydrolyzes dGTP over the other canonical NTPs.</text>
</comment>
<comment type="catalytic activity">
    <reaction evidence="1">
        <text>dGTP + H2O = 2'-deoxyguanosine + triphosphate + H(+)</text>
        <dbReference type="Rhea" id="RHEA:15193"/>
        <dbReference type="ChEBI" id="CHEBI:15377"/>
        <dbReference type="ChEBI" id="CHEBI:15378"/>
        <dbReference type="ChEBI" id="CHEBI:17172"/>
        <dbReference type="ChEBI" id="CHEBI:18036"/>
        <dbReference type="ChEBI" id="CHEBI:61429"/>
        <dbReference type="EC" id="3.1.5.1"/>
    </reaction>
</comment>
<comment type="cofactor">
    <cofactor evidence="1">
        <name>Mg(2+)</name>
        <dbReference type="ChEBI" id="CHEBI:18420"/>
    </cofactor>
</comment>
<comment type="subunit">
    <text evidence="1">Homotetramer.</text>
</comment>
<comment type="similarity">
    <text evidence="1">Belongs to the dGTPase family. Type 1 subfamily.</text>
</comment>
<name>DGTP_YERPY</name>
<dbReference type="EC" id="3.1.5.1" evidence="1"/>
<dbReference type="EMBL" id="CP000950">
    <property type="protein sequence ID" value="ACA69720.1"/>
    <property type="molecule type" value="Genomic_DNA"/>
</dbReference>
<dbReference type="RefSeq" id="WP_012304564.1">
    <property type="nucleotide sequence ID" value="NZ_CP009792.1"/>
</dbReference>
<dbReference type="SMR" id="B1JK16"/>
<dbReference type="KEGG" id="ypy:YPK_3453"/>
<dbReference type="PATRIC" id="fig|502800.11.peg.4194"/>
<dbReference type="GO" id="GO:0008832">
    <property type="term" value="F:dGTPase activity"/>
    <property type="evidence" value="ECO:0007669"/>
    <property type="project" value="UniProtKB-UniRule"/>
</dbReference>
<dbReference type="GO" id="GO:0000287">
    <property type="term" value="F:magnesium ion binding"/>
    <property type="evidence" value="ECO:0007669"/>
    <property type="project" value="UniProtKB-UniRule"/>
</dbReference>
<dbReference type="GO" id="GO:0006203">
    <property type="term" value="P:dGTP catabolic process"/>
    <property type="evidence" value="ECO:0007669"/>
    <property type="project" value="InterPro"/>
</dbReference>
<dbReference type="CDD" id="cd00077">
    <property type="entry name" value="HDc"/>
    <property type="match status" value="1"/>
</dbReference>
<dbReference type="FunFam" id="1.10.3210.10:FF:000009">
    <property type="entry name" value="Deoxyguanosinetriphosphate triphosphohydrolase"/>
    <property type="match status" value="1"/>
</dbReference>
<dbReference type="FunFam" id="1.10.3210.10:FF:000010">
    <property type="entry name" value="Deoxyguanosinetriphosphate triphosphohydrolase"/>
    <property type="match status" value="1"/>
</dbReference>
<dbReference type="FunFam" id="1.10.3410.10:FF:000001">
    <property type="entry name" value="Deoxyguanosinetriphosphate triphosphohydrolase"/>
    <property type="match status" value="1"/>
</dbReference>
<dbReference type="Gene3D" id="1.10.3210.10">
    <property type="entry name" value="Hypothetical protein af1432"/>
    <property type="match status" value="2"/>
</dbReference>
<dbReference type="Gene3D" id="1.10.3410.10">
    <property type="entry name" value="putative deoxyguanosinetriphosphate triphosphohydrolase like domain"/>
    <property type="match status" value="1"/>
</dbReference>
<dbReference type="HAMAP" id="MF_00030">
    <property type="entry name" value="dGTPase_type1"/>
    <property type="match status" value="1"/>
</dbReference>
<dbReference type="InterPro" id="IPR023293">
    <property type="entry name" value="dGTP_triP_hydro_central_sf"/>
</dbReference>
<dbReference type="InterPro" id="IPR006261">
    <property type="entry name" value="dGTPase"/>
</dbReference>
<dbReference type="InterPro" id="IPR050135">
    <property type="entry name" value="dGTPase-like"/>
</dbReference>
<dbReference type="InterPro" id="IPR020779">
    <property type="entry name" value="dNTPase_1"/>
</dbReference>
<dbReference type="InterPro" id="IPR003607">
    <property type="entry name" value="HD/PDEase_dom"/>
</dbReference>
<dbReference type="InterPro" id="IPR006674">
    <property type="entry name" value="HD_domain"/>
</dbReference>
<dbReference type="InterPro" id="IPR026875">
    <property type="entry name" value="PHydrolase_assoc_dom"/>
</dbReference>
<dbReference type="NCBIfam" id="TIGR01353">
    <property type="entry name" value="dGTP_triPase"/>
    <property type="match status" value="1"/>
</dbReference>
<dbReference type="NCBIfam" id="NF003429">
    <property type="entry name" value="PRK04926.1"/>
    <property type="match status" value="1"/>
</dbReference>
<dbReference type="PANTHER" id="PTHR11373:SF32">
    <property type="entry name" value="DEOXYGUANOSINETRIPHOSPHATE TRIPHOSPHOHYDROLASE"/>
    <property type="match status" value="1"/>
</dbReference>
<dbReference type="PANTHER" id="PTHR11373">
    <property type="entry name" value="DEOXYNUCLEOSIDE TRIPHOSPHATE TRIPHOSPHOHYDROLASE"/>
    <property type="match status" value="1"/>
</dbReference>
<dbReference type="Pfam" id="PF01966">
    <property type="entry name" value="HD"/>
    <property type="match status" value="1"/>
</dbReference>
<dbReference type="Pfam" id="PF13286">
    <property type="entry name" value="HD_assoc"/>
    <property type="match status" value="1"/>
</dbReference>
<dbReference type="SMART" id="SM00471">
    <property type="entry name" value="HDc"/>
    <property type="match status" value="1"/>
</dbReference>
<dbReference type="SUPFAM" id="SSF109604">
    <property type="entry name" value="HD-domain/PDEase-like"/>
    <property type="match status" value="1"/>
</dbReference>
<dbReference type="PROSITE" id="PS51831">
    <property type="entry name" value="HD"/>
    <property type="match status" value="1"/>
</dbReference>
<keyword id="KW-0378">Hydrolase</keyword>
<keyword id="KW-0460">Magnesium</keyword>
<organism>
    <name type="scientific">Yersinia pseudotuberculosis serotype O:3 (strain YPIII)</name>
    <dbReference type="NCBI Taxonomy" id="502800"/>
    <lineage>
        <taxon>Bacteria</taxon>
        <taxon>Pseudomonadati</taxon>
        <taxon>Pseudomonadota</taxon>
        <taxon>Gammaproteobacteria</taxon>
        <taxon>Enterobacterales</taxon>
        <taxon>Yersiniaceae</taxon>
        <taxon>Yersinia</taxon>
    </lineage>
</organism>
<gene>
    <name evidence="1" type="primary">dgt</name>
    <name type="ordered locus">YPK_3453</name>
</gene>